<evidence type="ECO:0000255" key="1">
    <source>
        <dbReference type="HAMAP-Rule" id="MF_01318"/>
    </source>
</evidence>
<evidence type="ECO:0000305" key="2"/>
<feature type="chain" id="PRO_1000141441" description="Large ribosomal subunit protein uL1">
    <location>
        <begin position="1"/>
        <end position="233"/>
    </location>
</feature>
<sequence length="233" mass="24454">MTKLSKRVKVIQSKIDRNKFYSLDDALNLVKECATAKFDESIDVAVQLGIDAKKSDQVVRGAVVLPAGTGKYVRVAVFAQGEKAEQAKAAGAEIVGMEDLADQIKSGKIDFDVLIASPDTMKIVGTLGQVLGPRGLMPNPKVGTVTPDVATAVKNAKAGQVQFRVDKAGIVHASIGRRSFEPTALKSNLLALLEALNKAKPPASKGVYLKKVAVSSTMGAGVRVDQASLQAAA</sequence>
<reference key="1">
    <citation type="journal article" date="2013" name="Proc. Natl. Acad. Sci. U.S.A.">
        <title>Polynucleobacter necessarius, a model for genome reduction in both free-living and symbiotic bacteria.</title>
        <authorList>
            <person name="Boscaro V."/>
            <person name="Felletti M."/>
            <person name="Vannini C."/>
            <person name="Ackerman M.S."/>
            <person name="Chain P.S."/>
            <person name="Malfatti S."/>
            <person name="Vergez L.M."/>
            <person name="Shin M."/>
            <person name="Doak T.G."/>
            <person name="Lynch M."/>
            <person name="Petroni G."/>
        </authorList>
    </citation>
    <scope>NUCLEOTIDE SEQUENCE [LARGE SCALE GENOMIC DNA]</scope>
    <source>
        <strain>STIR1</strain>
    </source>
</reference>
<name>RL1_POLNS</name>
<protein>
    <recommendedName>
        <fullName evidence="1">Large ribosomal subunit protein uL1</fullName>
    </recommendedName>
    <alternativeName>
        <fullName evidence="2">50S ribosomal protein L1</fullName>
    </alternativeName>
</protein>
<gene>
    <name evidence="1" type="primary">rplA</name>
    <name type="ordered locus">Pnec_0039</name>
</gene>
<dbReference type="EMBL" id="CP001010">
    <property type="protein sequence ID" value="ACB43367.1"/>
    <property type="molecule type" value="Genomic_DNA"/>
</dbReference>
<dbReference type="SMR" id="B1XSE9"/>
<dbReference type="STRING" id="452638.Pnec_0039"/>
<dbReference type="KEGG" id="pne:Pnec_0039"/>
<dbReference type="eggNOG" id="COG0081">
    <property type="taxonomic scope" value="Bacteria"/>
</dbReference>
<dbReference type="HOGENOM" id="CLU_062853_0_0_4"/>
<dbReference type="OrthoDB" id="9803740at2"/>
<dbReference type="GO" id="GO:0022625">
    <property type="term" value="C:cytosolic large ribosomal subunit"/>
    <property type="evidence" value="ECO:0007669"/>
    <property type="project" value="TreeGrafter"/>
</dbReference>
<dbReference type="GO" id="GO:0019843">
    <property type="term" value="F:rRNA binding"/>
    <property type="evidence" value="ECO:0007669"/>
    <property type="project" value="UniProtKB-UniRule"/>
</dbReference>
<dbReference type="GO" id="GO:0003735">
    <property type="term" value="F:structural constituent of ribosome"/>
    <property type="evidence" value="ECO:0007669"/>
    <property type="project" value="InterPro"/>
</dbReference>
<dbReference type="GO" id="GO:0000049">
    <property type="term" value="F:tRNA binding"/>
    <property type="evidence" value="ECO:0007669"/>
    <property type="project" value="UniProtKB-KW"/>
</dbReference>
<dbReference type="GO" id="GO:0006417">
    <property type="term" value="P:regulation of translation"/>
    <property type="evidence" value="ECO:0007669"/>
    <property type="project" value="UniProtKB-KW"/>
</dbReference>
<dbReference type="GO" id="GO:0006412">
    <property type="term" value="P:translation"/>
    <property type="evidence" value="ECO:0007669"/>
    <property type="project" value="UniProtKB-UniRule"/>
</dbReference>
<dbReference type="CDD" id="cd00403">
    <property type="entry name" value="Ribosomal_L1"/>
    <property type="match status" value="1"/>
</dbReference>
<dbReference type="FunFam" id="3.40.50.790:FF:000001">
    <property type="entry name" value="50S ribosomal protein L1"/>
    <property type="match status" value="1"/>
</dbReference>
<dbReference type="Gene3D" id="3.30.190.20">
    <property type="match status" value="1"/>
</dbReference>
<dbReference type="Gene3D" id="3.40.50.790">
    <property type="match status" value="1"/>
</dbReference>
<dbReference type="HAMAP" id="MF_01318_B">
    <property type="entry name" value="Ribosomal_uL1_B"/>
    <property type="match status" value="1"/>
</dbReference>
<dbReference type="InterPro" id="IPR005878">
    <property type="entry name" value="Ribosom_uL1_bac-type"/>
</dbReference>
<dbReference type="InterPro" id="IPR002143">
    <property type="entry name" value="Ribosomal_uL1"/>
</dbReference>
<dbReference type="InterPro" id="IPR023674">
    <property type="entry name" value="Ribosomal_uL1-like"/>
</dbReference>
<dbReference type="InterPro" id="IPR028364">
    <property type="entry name" value="Ribosomal_uL1/biogenesis"/>
</dbReference>
<dbReference type="InterPro" id="IPR016095">
    <property type="entry name" value="Ribosomal_uL1_3-a/b-sand"/>
</dbReference>
<dbReference type="InterPro" id="IPR023673">
    <property type="entry name" value="Ribosomal_uL1_CS"/>
</dbReference>
<dbReference type="NCBIfam" id="TIGR01169">
    <property type="entry name" value="rplA_bact"/>
    <property type="match status" value="1"/>
</dbReference>
<dbReference type="PANTHER" id="PTHR36427">
    <property type="entry name" value="54S RIBOSOMAL PROTEIN L1, MITOCHONDRIAL"/>
    <property type="match status" value="1"/>
</dbReference>
<dbReference type="PANTHER" id="PTHR36427:SF3">
    <property type="entry name" value="LARGE RIBOSOMAL SUBUNIT PROTEIN UL1M"/>
    <property type="match status" value="1"/>
</dbReference>
<dbReference type="Pfam" id="PF00687">
    <property type="entry name" value="Ribosomal_L1"/>
    <property type="match status" value="1"/>
</dbReference>
<dbReference type="PIRSF" id="PIRSF002155">
    <property type="entry name" value="Ribosomal_L1"/>
    <property type="match status" value="1"/>
</dbReference>
<dbReference type="SUPFAM" id="SSF56808">
    <property type="entry name" value="Ribosomal protein L1"/>
    <property type="match status" value="1"/>
</dbReference>
<dbReference type="PROSITE" id="PS01199">
    <property type="entry name" value="RIBOSOMAL_L1"/>
    <property type="match status" value="1"/>
</dbReference>
<comment type="function">
    <text evidence="1">Binds directly to 23S rRNA. The L1 stalk is quite mobile in the ribosome, and is involved in E site tRNA release.</text>
</comment>
<comment type="function">
    <text evidence="1">Protein L1 is also a translational repressor protein, it controls the translation of the L11 operon by binding to its mRNA.</text>
</comment>
<comment type="subunit">
    <text evidence="1">Part of the 50S ribosomal subunit.</text>
</comment>
<comment type="similarity">
    <text evidence="1">Belongs to the universal ribosomal protein uL1 family.</text>
</comment>
<keyword id="KW-0678">Repressor</keyword>
<keyword id="KW-0687">Ribonucleoprotein</keyword>
<keyword id="KW-0689">Ribosomal protein</keyword>
<keyword id="KW-0694">RNA-binding</keyword>
<keyword id="KW-0699">rRNA-binding</keyword>
<keyword id="KW-0810">Translation regulation</keyword>
<keyword id="KW-0820">tRNA-binding</keyword>
<organism>
    <name type="scientific">Polynucleobacter necessarius subsp. necessarius (strain STIR1)</name>
    <dbReference type="NCBI Taxonomy" id="452638"/>
    <lineage>
        <taxon>Bacteria</taxon>
        <taxon>Pseudomonadati</taxon>
        <taxon>Pseudomonadota</taxon>
        <taxon>Betaproteobacteria</taxon>
        <taxon>Burkholderiales</taxon>
        <taxon>Burkholderiaceae</taxon>
        <taxon>Polynucleobacter</taxon>
    </lineage>
</organism>
<proteinExistence type="inferred from homology"/>
<accession>B1XSE9</accession>